<dbReference type="EMBL" id="CP000312">
    <property type="protein sequence ID" value="ABG86691.1"/>
    <property type="molecule type" value="Genomic_DNA"/>
</dbReference>
<dbReference type="RefSeq" id="WP_003454907.1">
    <property type="nucleotide sequence ID" value="NZ_CAXVKH010000006.1"/>
</dbReference>
<dbReference type="SMR" id="Q0SR53"/>
<dbReference type="GeneID" id="93001338"/>
<dbReference type="KEGG" id="cpr:CPR_2095"/>
<dbReference type="Proteomes" id="UP000001824">
    <property type="component" value="Chromosome"/>
</dbReference>
<dbReference type="GO" id="GO:0022625">
    <property type="term" value="C:cytosolic large ribosomal subunit"/>
    <property type="evidence" value="ECO:0007669"/>
    <property type="project" value="TreeGrafter"/>
</dbReference>
<dbReference type="GO" id="GO:0003735">
    <property type="term" value="F:structural constituent of ribosome"/>
    <property type="evidence" value="ECO:0007669"/>
    <property type="project" value="InterPro"/>
</dbReference>
<dbReference type="GO" id="GO:0006412">
    <property type="term" value="P:translation"/>
    <property type="evidence" value="ECO:0007669"/>
    <property type="project" value="UniProtKB-UniRule"/>
</dbReference>
<dbReference type="FunFam" id="2.40.50.100:FF:000004">
    <property type="entry name" value="50S ribosomal protein L27"/>
    <property type="match status" value="1"/>
</dbReference>
<dbReference type="Gene3D" id="2.40.50.100">
    <property type="match status" value="1"/>
</dbReference>
<dbReference type="HAMAP" id="MF_00539">
    <property type="entry name" value="Ribosomal_bL27"/>
    <property type="match status" value="1"/>
</dbReference>
<dbReference type="InterPro" id="IPR001684">
    <property type="entry name" value="Ribosomal_bL27"/>
</dbReference>
<dbReference type="InterPro" id="IPR018261">
    <property type="entry name" value="Ribosomal_bL27_CS"/>
</dbReference>
<dbReference type="NCBIfam" id="TIGR00062">
    <property type="entry name" value="L27"/>
    <property type="match status" value="1"/>
</dbReference>
<dbReference type="PANTHER" id="PTHR15893:SF0">
    <property type="entry name" value="LARGE RIBOSOMAL SUBUNIT PROTEIN BL27M"/>
    <property type="match status" value="1"/>
</dbReference>
<dbReference type="PANTHER" id="PTHR15893">
    <property type="entry name" value="RIBOSOMAL PROTEIN L27"/>
    <property type="match status" value="1"/>
</dbReference>
<dbReference type="Pfam" id="PF01016">
    <property type="entry name" value="Ribosomal_L27"/>
    <property type="match status" value="1"/>
</dbReference>
<dbReference type="PRINTS" id="PR00063">
    <property type="entry name" value="RIBOSOMALL27"/>
</dbReference>
<dbReference type="SUPFAM" id="SSF110324">
    <property type="entry name" value="Ribosomal L27 protein-like"/>
    <property type="match status" value="1"/>
</dbReference>
<dbReference type="PROSITE" id="PS00831">
    <property type="entry name" value="RIBOSOMAL_L27"/>
    <property type="match status" value="1"/>
</dbReference>
<evidence type="ECO:0000250" key="1">
    <source>
        <dbReference type="UniProtKB" id="Q2FXT0"/>
    </source>
</evidence>
<evidence type="ECO:0000255" key="2">
    <source>
        <dbReference type="HAMAP-Rule" id="MF_00539"/>
    </source>
</evidence>
<evidence type="ECO:0000305" key="3"/>
<sequence>MLKMNLQLFAHKKGVGSSKNGRDSEAKRLGVKCADGQFVLAGNILVRQRGTKIHPGANVGKGGDDTLFAKIDGVVKYERLGRDKKKASVYPVNVEEVIAE</sequence>
<accession>Q0SR53</accession>
<organism>
    <name type="scientific">Clostridium perfringens (strain SM101 / Type A)</name>
    <dbReference type="NCBI Taxonomy" id="289380"/>
    <lineage>
        <taxon>Bacteria</taxon>
        <taxon>Bacillati</taxon>
        <taxon>Bacillota</taxon>
        <taxon>Clostridia</taxon>
        <taxon>Eubacteriales</taxon>
        <taxon>Clostridiaceae</taxon>
        <taxon>Clostridium</taxon>
    </lineage>
</organism>
<keyword id="KW-0687">Ribonucleoprotein</keyword>
<keyword id="KW-0689">Ribosomal protein</keyword>
<protein>
    <recommendedName>
        <fullName evidence="2">Large ribosomal subunit protein bL27</fullName>
    </recommendedName>
    <alternativeName>
        <fullName evidence="3">50S ribosomal protein L27</fullName>
    </alternativeName>
</protein>
<feature type="propeptide" id="PRO_0000459887" evidence="1">
    <location>
        <begin position="1"/>
        <end position="9"/>
    </location>
</feature>
<feature type="chain" id="PRO_1000017458" description="Large ribosomal subunit protein bL27">
    <location>
        <begin position="10"/>
        <end position="100"/>
    </location>
</feature>
<gene>
    <name evidence="2" type="primary">rpmA</name>
    <name type="ordered locus">CPR_2095</name>
</gene>
<name>RL27_CLOPS</name>
<comment type="PTM">
    <text evidence="1">The N-terminus is cleaved by ribosomal processing cysteine protease Prp.</text>
</comment>
<comment type="similarity">
    <text evidence="2">Belongs to the bacterial ribosomal protein bL27 family.</text>
</comment>
<proteinExistence type="inferred from homology"/>
<reference key="1">
    <citation type="journal article" date="2006" name="Genome Res.">
        <title>Skewed genomic variability in strains of the toxigenic bacterial pathogen, Clostridium perfringens.</title>
        <authorList>
            <person name="Myers G.S.A."/>
            <person name="Rasko D.A."/>
            <person name="Cheung J.K."/>
            <person name="Ravel J."/>
            <person name="Seshadri R."/>
            <person name="DeBoy R.T."/>
            <person name="Ren Q."/>
            <person name="Varga J."/>
            <person name="Awad M.M."/>
            <person name="Brinkac L.M."/>
            <person name="Daugherty S.C."/>
            <person name="Haft D.H."/>
            <person name="Dodson R.J."/>
            <person name="Madupu R."/>
            <person name="Nelson W.C."/>
            <person name="Rosovitz M.J."/>
            <person name="Sullivan S.A."/>
            <person name="Khouri H."/>
            <person name="Dimitrov G.I."/>
            <person name="Watkins K.L."/>
            <person name="Mulligan S."/>
            <person name="Benton J."/>
            <person name="Radune D."/>
            <person name="Fisher D.J."/>
            <person name="Atkins H.S."/>
            <person name="Hiscox T."/>
            <person name="Jost B.H."/>
            <person name="Billington S.J."/>
            <person name="Songer J.G."/>
            <person name="McClane B.A."/>
            <person name="Titball R.W."/>
            <person name="Rood J.I."/>
            <person name="Melville S.B."/>
            <person name="Paulsen I.T."/>
        </authorList>
    </citation>
    <scope>NUCLEOTIDE SEQUENCE [LARGE SCALE GENOMIC DNA]</scope>
    <source>
        <strain>SM101 / Type A</strain>
    </source>
</reference>